<name>LOLB_HAEIE</name>
<reference key="1">
    <citation type="journal article" date="2007" name="Genome Biol.">
        <title>Characterization and modeling of the Haemophilus influenzae core and supragenomes based on the complete genomic sequences of Rd and 12 clinical nontypeable strains.</title>
        <authorList>
            <person name="Hogg J.S."/>
            <person name="Hu F.Z."/>
            <person name="Janto B."/>
            <person name="Boissy R."/>
            <person name="Hayes J."/>
            <person name="Keefe R."/>
            <person name="Post J.C."/>
            <person name="Ehrlich G.D."/>
        </authorList>
    </citation>
    <scope>NUCLEOTIDE SEQUENCE [LARGE SCALE GENOMIC DNA]</scope>
    <source>
        <strain>PittEE</strain>
    </source>
</reference>
<gene>
    <name evidence="1" type="primary">lolB</name>
    <name type="ordered locus">CGSHiEE_05685</name>
</gene>
<sequence>MKTFKFLTALFATAILTACTLDMERPTNVQYIDKTDAIWQQHLQKIQKIQSYQAKGQIGYISPTERFSSRFEWQYQNPKSYTLKLYSLISKSTLLIQMHQSGMTISDNNGNQQSAANAKLLLQEIIGMDVPLEHLAYWLKGQPAMNADYQVGTNHLLGAFTYHVDGSQWTADYLTYHSNNSMPENILLKNDSTKQTLKIRVDEWIY</sequence>
<keyword id="KW-0998">Cell outer membrane</keyword>
<keyword id="KW-0143">Chaperone</keyword>
<keyword id="KW-0449">Lipoprotein</keyword>
<keyword id="KW-0472">Membrane</keyword>
<keyword id="KW-0564">Palmitate</keyword>
<keyword id="KW-0653">Protein transport</keyword>
<keyword id="KW-0732">Signal</keyword>
<keyword id="KW-0813">Transport</keyword>
<accession>A5UCK1</accession>
<evidence type="ECO:0000255" key="1">
    <source>
        <dbReference type="HAMAP-Rule" id="MF_00233"/>
    </source>
</evidence>
<organism>
    <name type="scientific">Haemophilus influenzae (strain PittEE)</name>
    <dbReference type="NCBI Taxonomy" id="374930"/>
    <lineage>
        <taxon>Bacteria</taxon>
        <taxon>Pseudomonadati</taxon>
        <taxon>Pseudomonadota</taxon>
        <taxon>Gammaproteobacteria</taxon>
        <taxon>Pasteurellales</taxon>
        <taxon>Pasteurellaceae</taxon>
        <taxon>Haemophilus</taxon>
    </lineage>
</organism>
<protein>
    <recommendedName>
        <fullName evidence="1">Outer-membrane lipoprotein LolB</fullName>
    </recommendedName>
</protein>
<feature type="signal peptide" evidence="1">
    <location>
        <begin position="1"/>
        <end position="18"/>
    </location>
</feature>
<feature type="chain" id="PRO_0000336606" description="Outer-membrane lipoprotein LolB">
    <location>
        <begin position="19"/>
        <end position="206"/>
    </location>
</feature>
<feature type="lipid moiety-binding region" description="N-palmitoyl cysteine" evidence="1">
    <location>
        <position position="19"/>
    </location>
</feature>
<feature type="lipid moiety-binding region" description="S-diacylglycerol cysteine" evidence="1">
    <location>
        <position position="19"/>
    </location>
</feature>
<dbReference type="EMBL" id="CP000671">
    <property type="protein sequence ID" value="ABQ98502.1"/>
    <property type="molecule type" value="Genomic_DNA"/>
</dbReference>
<dbReference type="SMR" id="A5UCK1"/>
<dbReference type="KEGG" id="hip:CGSHiEE_05685"/>
<dbReference type="HOGENOM" id="CLU_092816_1_1_6"/>
<dbReference type="GO" id="GO:0009279">
    <property type="term" value="C:cell outer membrane"/>
    <property type="evidence" value="ECO:0007669"/>
    <property type="project" value="UniProtKB-SubCell"/>
</dbReference>
<dbReference type="GO" id="GO:0044874">
    <property type="term" value="P:lipoprotein localization to outer membrane"/>
    <property type="evidence" value="ECO:0007669"/>
    <property type="project" value="UniProtKB-UniRule"/>
</dbReference>
<dbReference type="GO" id="GO:0015031">
    <property type="term" value="P:protein transport"/>
    <property type="evidence" value="ECO:0007669"/>
    <property type="project" value="UniProtKB-KW"/>
</dbReference>
<dbReference type="CDD" id="cd16326">
    <property type="entry name" value="LolB"/>
    <property type="match status" value="1"/>
</dbReference>
<dbReference type="Gene3D" id="2.50.20.10">
    <property type="entry name" value="Lipoprotein localisation LolA/LolB/LppX"/>
    <property type="match status" value="1"/>
</dbReference>
<dbReference type="HAMAP" id="MF_00233">
    <property type="entry name" value="LolB"/>
    <property type="match status" value="1"/>
</dbReference>
<dbReference type="InterPro" id="IPR029046">
    <property type="entry name" value="LolA/LolB/LppX"/>
</dbReference>
<dbReference type="InterPro" id="IPR004565">
    <property type="entry name" value="OM_lipoprot_LolB"/>
</dbReference>
<dbReference type="NCBIfam" id="TIGR00548">
    <property type="entry name" value="lolB"/>
    <property type="match status" value="1"/>
</dbReference>
<dbReference type="Pfam" id="PF03550">
    <property type="entry name" value="LolB"/>
    <property type="match status" value="1"/>
</dbReference>
<dbReference type="SUPFAM" id="SSF89392">
    <property type="entry name" value="Prokaryotic lipoproteins and lipoprotein localization factors"/>
    <property type="match status" value="1"/>
</dbReference>
<dbReference type="PROSITE" id="PS51257">
    <property type="entry name" value="PROKAR_LIPOPROTEIN"/>
    <property type="match status" value="1"/>
</dbReference>
<proteinExistence type="inferred from homology"/>
<comment type="function">
    <text evidence="1">Plays a critical role in the incorporation of lipoproteins in the outer membrane after they are released by the LolA protein.</text>
</comment>
<comment type="subunit">
    <text evidence="1">Monomer.</text>
</comment>
<comment type="subcellular location">
    <subcellularLocation>
        <location evidence="1">Cell outer membrane</location>
        <topology evidence="1">Lipid-anchor</topology>
    </subcellularLocation>
</comment>
<comment type="similarity">
    <text evidence="1">Belongs to the LolB family.</text>
</comment>